<organism>
    <name type="scientific">Corynebacterium diphtheriae (strain ATCC 700971 / NCTC 13129 / Biotype gravis)</name>
    <dbReference type="NCBI Taxonomy" id="257309"/>
    <lineage>
        <taxon>Bacteria</taxon>
        <taxon>Bacillati</taxon>
        <taxon>Actinomycetota</taxon>
        <taxon>Actinomycetes</taxon>
        <taxon>Mycobacteriales</taxon>
        <taxon>Corynebacteriaceae</taxon>
        <taxon>Corynebacterium</taxon>
    </lineage>
</organism>
<accession>Q6NG87</accession>
<reference key="1">
    <citation type="journal article" date="2003" name="Nucleic Acids Res.">
        <title>The complete genome sequence and analysis of Corynebacterium diphtheriae NCTC13129.</title>
        <authorList>
            <person name="Cerdeno-Tarraga A.-M."/>
            <person name="Efstratiou A."/>
            <person name="Dover L.G."/>
            <person name="Holden M.T.G."/>
            <person name="Pallen M.J."/>
            <person name="Bentley S.D."/>
            <person name="Besra G.S."/>
            <person name="Churcher C.M."/>
            <person name="James K.D."/>
            <person name="De Zoysa A."/>
            <person name="Chillingworth T."/>
            <person name="Cronin A."/>
            <person name="Dowd L."/>
            <person name="Feltwell T."/>
            <person name="Hamlin N."/>
            <person name="Holroyd S."/>
            <person name="Jagels K."/>
            <person name="Moule S."/>
            <person name="Quail M.A."/>
            <person name="Rabbinowitsch E."/>
            <person name="Rutherford K.M."/>
            <person name="Thomson N.R."/>
            <person name="Unwin L."/>
            <person name="Whitehead S."/>
            <person name="Barrell B.G."/>
            <person name="Parkhill J."/>
        </authorList>
    </citation>
    <scope>NUCLEOTIDE SEQUENCE [LARGE SCALE GENOMIC DNA]</scope>
    <source>
        <strain>ATCC 700971 / NCTC 13129 / Biotype gravis</strain>
    </source>
</reference>
<gene>
    <name evidence="1" type="primary">lipB</name>
    <name type="ordered locus">DIP1640</name>
</gene>
<comment type="function">
    <text evidence="1">Catalyzes the transfer of endogenously produced octanoic acid from octanoyl-acyl-carrier-protein onto the lipoyl domains of lipoate-dependent enzymes. Lipoyl-ACP can also act as a substrate although octanoyl-ACP is likely to be the physiological substrate.</text>
</comment>
<comment type="catalytic activity">
    <reaction evidence="1">
        <text>octanoyl-[ACP] + L-lysyl-[protein] = N(6)-octanoyl-L-lysyl-[protein] + holo-[ACP] + H(+)</text>
        <dbReference type="Rhea" id="RHEA:17665"/>
        <dbReference type="Rhea" id="RHEA-COMP:9636"/>
        <dbReference type="Rhea" id="RHEA-COMP:9685"/>
        <dbReference type="Rhea" id="RHEA-COMP:9752"/>
        <dbReference type="Rhea" id="RHEA-COMP:9928"/>
        <dbReference type="ChEBI" id="CHEBI:15378"/>
        <dbReference type="ChEBI" id="CHEBI:29969"/>
        <dbReference type="ChEBI" id="CHEBI:64479"/>
        <dbReference type="ChEBI" id="CHEBI:78463"/>
        <dbReference type="ChEBI" id="CHEBI:78809"/>
        <dbReference type="EC" id="2.3.1.181"/>
    </reaction>
</comment>
<comment type="pathway">
    <text evidence="1">Protein modification; protein lipoylation via endogenous pathway; protein N(6)-(lipoyl)lysine from octanoyl-[acyl-carrier-protein]: step 1/2.</text>
</comment>
<comment type="subcellular location">
    <subcellularLocation>
        <location evidence="1">Cytoplasm</location>
    </subcellularLocation>
</comment>
<comment type="miscellaneous">
    <text evidence="1">In the reaction, the free carboxyl group of octanoic acid is attached via an amide linkage to the epsilon-amino group of a specific lysine residue of lipoyl domains of lipoate-dependent enzymes.</text>
</comment>
<comment type="similarity">
    <text evidence="1">Belongs to the LipB family.</text>
</comment>
<protein>
    <recommendedName>
        <fullName evidence="1">Octanoyltransferase</fullName>
        <ecNumber evidence="1">2.3.1.181</ecNumber>
    </recommendedName>
    <alternativeName>
        <fullName evidence="1">Lipoate-protein ligase B</fullName>
    </alternativeName>
    <alternativeName>
        <fullName evidence="1">Lipoyl/octanoyl transferase</fullName>
    </alternativeName>
    <alternativeName>
        <fullName evidence="1">Octanoyl-[acyl-carrier-protein]-protein N-octanoyltransferase</fullName>
    </alternativeName>
</protein>
<proteinExistence type="inferred from homology"/>
<name>LIPB_CORDI</name>
<feature type="chain" id="PRO_0000062827" description="Octanoyltransferase">
    <location>
        <begin position="1"/>
        <end position="250"/>
    </location>
</feature>
<feature type="domain" description="BPL/LPL catalytic" evidence="2">
    <location>
        <begin position="49"/>
        <end position="230"/>
    </location>
</feature>
<feature type="active site" description="Acyl-thioester intermediate" evidence="1">
    <location>
        <position position="191"/>
    </location>
</feature>
<feature type="binding site" evidence="1">
    <location>
        <begin position="87"/>
        <end position="94"/>
    </location>
    <ligand>
        <name>substrate</name>
    </ligand>
</feature>
<feature type="binding site" evidence="1">
    <location>
        <begin position="160"/>
        <end position="162"/>
    </location>
    <ligand>
        <name>substrate</name>
    </ligand>
</feature>
<feature type="binding site" evidence="1">
    <location>
        <begin position="173"/>
        <end position="175"/>
    </location>
    <ligand>
        <name>substrate</name>
    </ligand>
</feature>
<feature type="site" description="Lowers pKa of active site Cys" evidence="1">
    <location>
        <position position="157"/>
    </location>
</feature>
<keyword id="KW-0012">Acyltransferase</keyword>
<keyword id="KW-0963">Cytoplasm</keyword>
<keyword id="KW-1185">Reference proteome</keyword>
<keyword id="KW-0808">Transferase</keyword>
<evidence type="ECO:0000255" key="1">
    <source>
        <dbReference type="HAMAP-Rule" id="MF_00013"/>
    </source>
</evidence>
<evidence type="ECO:0000255" key="2">
    <source>
        <dbReference type="PROSITE-ProRule" id="PRU01067"/>
    </source>
</evidence>
<sequence length="250" mass="27509">MTAVRDPFFPADQSIRASHNPIEVRELGMMDYQRAWDLQAELNKQRQHDEINDVILVLEHPSIYTAGKRTQPSDRPQNGLPVIDVDRGGRITWHGPGQLVMYPIIKLAEPIDVVDYVRRVEEALIHVIRTHGIPNAGRIDGRSGVWVPGKTPEEHRKVAALGIRIAGGVTMHGLALNCDNTVEFYDYIVPCGISDAGVTTMSQEVGNDVTTQSMTAPLLAALDDAFAGRLVVADHSFASAPDPTKIPRRP</sequence>
<dbReference type="EC" id="2.3.1.181" evidence="1"/>
<dbReference type="EMBL" id="BX248358">
    <property type="protein sequence ID" value="CAE50168.1"/>
    <property type="molecule type" value="Genomic_DNA"/>
</dbReference>
<dbReference type="RefSeq" id="WP_010935216.1">
    <property type="nucleotide sequence ID" value="NC_002935.2"/>
</dbReference>
<dbReference type="SMR" id="Q6NG87"/>
<dbReference type="STRING" id="257309.DIP1640"/>
<dbReference type="KEGG" id="cdi:DIP1640"/>
<dbReference type="HOGENOM" id="CLU_035168_2_1_11"/>
<dbReference type="UniPathway" id="UPA00538">
    <property type="reaction ID" value="UER00592"/>
</dbReference>
<dbReference type="Proteomes" id="UP000002198">
    <property type="component" value="Chromosome"/>
</dbReference>
<dbReference type="GO" id="GO:0005737">
    <property type="term" value="C:cytoplasm"/>
    <property type="evidence" value="ECO:0007669"/>
    <property type="project" value="UniProtKB-SubCell"/>
</dbReference>
<dbReference type="GO" id="GO:0033819">
    <property type="term" value="F:lipoyl(octanoyl) transferase activity"/>
    <property type="evidence" value="ECO:0007669"/>
    <property type="project" value="UniProtKB-EC"/>
</dbReference>
<dbReference type="GO" id="GO:0036211">
    <property type="term" value="P:protein modification process"/>
    <property type="evidence" value="ECO:0007669"/>
    <property type="project" value="InterPro"/>
</dbReference>
<dbReference type="CDD" id="cd16444">
    <property type="entry name" value="LipB"/>
    <property type="match status" value="1"/>
</dbReference>
<dbReference type="Gene3D" id="3.30.930.10">
    <property type="entry name" value="Bira Bifunctional Protein, Domain 2"/>
    <property type="match status" value="1"/>
</dbReference>
<dbReference type="HAMAP" id="MF_00013">
    <property type="entry name" value="LipB"/>
    <property type="match status" value="1"/>
</dbReference>
<dbReference type="InterPro" id="IPR045864">
    <property type="entry name" value="aa-tRNA-synth_II/BPL/LPL"/>
</dbReference>
<dbReference type="InterPro" id="IPR004143">
    <property type="entry name" value="BPL_LPL_catalytic"/>
</dbReference>
<dbReference type="InterPro" id="IPR000544">
    <property type="entry name" value="Octanoyltransferase"/>
</dbReference>
<dbReference type="InterPro" id="IPR020605">
    <property type="entry name" value="Octanoyltransferase_CS"/>
</dbReference>
<dbReference type="NCBIfam" id="TIGR00214">
    <property type="entry name" value="lipB"/>
    <property type="match status" value="1"/>
</dbReference>
<dbReference type="NCBIfam" id="NF010925">
    <property type="entry name" value="PRK14345.1"/>
    <property type="match status" value="1"/>
</dbReference>
<dbReference type="PANTHER" id="PTHR10993:SF7">
    <property type="entry name" value="LIPOYLTRANSFERASE 2, MITOCHONDRIAL-RELATED"/>
    <property type="match status" value="1"/>
</dbReference>
<dbReference type="PANTHER" id="PTHR10993">
    <property type="entry name" value="OCTANOYLTRANSFERASE"/>
    <property type="match status" value="1"/>
</dbReference>
<dbReference type="Pfam" id="PF21948">
    <property type="entry name" value="LplA-B_cat"/>
    <property type="match status" value="1"/>
</dbReference>
<dbReference type="PIRSF" id="PIRSF016262">
    <property type="entry name" value="LPLase"/>
    <property type="match status" value="1"/>
</dbReference>
<dbReference type="SUPFAM" id="SSF55681">
    <property type="entry name" value="Class II aaRS and biotin synthetases"/>
    <property type="match status" value="1"/>
</dbReference>
<dbReference type="PROSITE" id="PS51733">
    <property type="entry name" value="BPL_LPL_CATALYTIC"/>
    <property type="match status" value="1"/>
</dbReference>
<dbReference type="PROSITE" id="PS01313">
    <property type="entry name" value="LIPB"/>
    <property type="match status" value="1"/>
</dbReference>